<gene>
    <name evidence="1" type="primary">groES</name>
    <name evidence="1" type="synonym">groS</name>
    <name type="ordered locus">CLI_3469</name>
</gene>
<dbReference type="EMBL" id="CP000728">
    <property type="protein sequence ID" value="ABS42872.1"/>
    <property type="molecule type" value="Genomic_DNA"/>
</dbReference>
<dbReference type="RefSeq" id="WP_003357350.1">
    <property type="nucleotide sequence ID" value="NC_009699.1"/>
</dbReference>
<dbReference type="SMR" id="A7GIN4"/>
<dbReference type="KEGG" id="cbf:CLI_3469"/>
<dbReference type="HOGENOM" id="CLU_132825_2_0_9"/>
<dbReference type="Proteomes" id="UP000002410">
    <property type="component" value="Chromosome"/>
</dbReference>
<dbReference type="GO" id="GO:0005737">
    <property type="term" value="C:cytoplasm"/>
    <property type="evidence" value="ECO:0007669"/>
    <property type="project" value="UniProtKB-SubCell"/>
</dbReference>
<dbReference type="GO" id="GO:0005524">
    <property type="term" value="F:ATP binding"/>
    <property type="evidence" value="ECO:0007669"/>
    <property type="project" value="InterPro"/>
</dbReference>
<dbReference type="GO" id="GO:0046872">
    <property type="term" value="F:metal ion binding"/>
    <property type="evidence" value="ECO:0007669"/>
    <property type="project" value="TreeGrafter"/>
</dbReference>
<dbReference type="GO" id="GO:0044183">
    <property type="term" value="F:protein folding chaperone"/>
    <property type="evidence" value="ECO:0007669"/>
    <property type="project" value="InterPro"/>
</dbReference>
<dbReference type="GO" id="GO:0051087">
    <property type="term" value="F:protein-folding chaperone binding"/>
    <property type="evidence" value="ECO:0007669"/>
    <property type="project" value="TreeGrafter"/>
</dbReference>
<dbReference type="GO" id="GO:0051082">
    <property type="term" value="F:unfolded protein binding"/>
    <property type="evidence" value="ECO:0007669"/>
    <property type="project" value="TreeGrafter"/>
</dbReference>
<dbReference type="GO" id="GO:0051085">
    <property type="term" value="P:chaperone cofactor-dependent protein refolding"/>
    <property type="evidence" value="ECO:0007669"/>
    <property type="project" value="TreeGrafter"/>
</dbReference>
<dbReference type="CDD" id="cd00320">
    <property type="entry name" value="cpn10"/>
    <property type="match status" value="1"/>
</dbReference>
<dbReference type="FunFam" id="2.30.33.40:FF:000001">
    <property type="entry name" value="10 kDa chaperonin"/>
    <property type="match status" value="1"/>
</dbReference>
<dbReference type="Gene3D" id="2.30.33.40">
    <property type="entry name" value="GroES chaperonin"/>
    <property type="match status" value="1"/>
</dbReference>
<dbReference type="HAMAP" id="MF_00580">
    <property type="entry name" value="CH10"/>
    <property type="match status" value="1"/>
</dbReference>
<dbReference type="InterPro" id="IPR020818">
    <property type="entry name" value="Chaperonin_GroES"/>
</dbReference>
<dbReference type="InterPro" id="IPR037124">
    <property type="entry name" value="Chaperonin_GroES_sf"/>
</dbReference>
<dbReference type="InterPro" id="IPR018369">
    <property type="entry name" value="Chaprnonin_Cpn10_CS"/>
</dbReference>
<dbReference type="InterPro" id="IPR011032">
    <property type="entry name" value="GroES-like_sf"/>
</dbReference>
<dbReference type="NCBIfam" id="NF001527">
    <property type="entry name" value="PRK00364.1-2"/>
    <property type="match status" value="1"/>
</dbReference>
<dbReference type="NCBIfam" id="NF001531">
    <property type="entry name" value="PRK00364.2-2"/>
    <property type="match status" value="1"/>
</dbReference>
<dbReference type="NCBIfam" id="NF001533">
    <property type="entry name" value="PRK00364.2-4"/>
    <property type="match status" value="1"/>
</dbReference>
<dbReference type="PANTHER" id="PTHR10772">
    <property type="entry name" value="10 KDA HEAT SHOCK PROTEIN"/>
    <property type="match status" value="1"/>
</dbReference>
<dbReference type="PANTHER" id="PTHR10772:SF58">
    <property type="entry name" value="CO-CHAPERONIN GROES"/>
    <property type="match status" value="1"/>
</dbReference>
<dbReference type="Pfam" id="PF00166">
    <property type="entry name" value="Cpn10"/>
    <property type="match status" value="1"/>
</dbReference>
<dbReference type="PRINTS" id="PR00297">
    <property type="entry name" value="CHAPERONIN10"/>
</dbReference>
<dbReference type="SMART" id="SM00883">
    <property type="entry name" value="Cpn10"/>
    <property type="match status" value="1"/>
</dbReference>
<dbReference type="SUPFAM" id="SSF50129">
    <property type="entry name" value="GroES-like"/>
    <property type="match status" value="1"/>
</dbReference>
<dbReference type="PROSITE" id="PS00681">
    <property type="entry name" value="CHAPERONINS_CPN10"/>
    <property type="match status" value="1"/>
</dbReference>
<protein>
    <recommendedName>
        <fullName evidence="1">Co-chaperonin GroES</fullName>
    </recommendedName>
    <alternativeName>
        <fullName evidence="1">10 kDa chaperonin</fullName>
    </alternativeName>
    <alternativeName>
        <fullName evidence="1">Chaperonin-10</fullName>
        <shortName evidence="1">Cpn10</shortName>
    </alternativeName>
</protein>
<reference key="1">
    <citation type="submission" date="2007-06" db="EMBL/GenBank/DDBJ databases">
        <authorList>
            <person name="Brinkac L.M."/>
            <person name="Daugherty S."/>
            <person name="Dodson R.J."/>
            <person name="Madupu R."/>
            <person name="Brown J.L."/>
            <person name="Bruce D."/>
            <person name="Detter C."/>
            <person name="Munk C."/>
            <person name="Smith L.A."/>
            <person name="Smith T.J."/>
            <person name="White O."/>
            <person name="Brettin T.S."/>
        </authorList>
    </citation>
    <scope>NUCLEOTIDE SEQUENCE [LARGE SCALE GENOMIC DNA]</scope>
    <source>
        <strain>Langeland / NCTC 10281 / Type F</strain>
    </source>
</reference>
<feature type="chain" id="PRO_1000025238" description="Co-chaperonin GroES">
    <location>
        <begin position="1"/>
        <end position="95"/>
    </location>
</feature>
<name>CH10_CLOBL</name>
<sequence length="95" mass="10141">MNIRPLGDRVVIKRVEAEETTKSGIVLPGAAKEKPQVAEVIAVGPGGLVDGKEVKMELKVGDKVLFSKYAGNEVKIEGEEVTILKQDDILAVVEG</sequence>
<proteinExistence type="inferred from homology"/>
<evidence type="ECO:0000255" key="1">
    <source>
        <dbReference type="HAMAP-Rule" id="MF_00580"/>
    </source>
</evidence>
<comment type="function">
    <text evidence="1">Together with the chaperonin GroEL, plays an essential role in assisting protein folding. The GroEL-GroES system forms a nano-cage that allows encapsulation of the non-native substrate proteins and provides a physical environment optimized to promote and accelerate protein folding. GroES binds to the apical surface of the GroEL ring, thereby capping the opening of the GroEL channel.</text>
</comment>
<comment type="subunit">
    <text evidence="1">Heptamer of 7 subunits arranged in a ring. Interacts with the chaperonin GroEL.</text>
</comment>
<comment type="subcellular location">
    <subcellularLocation>
        <location evidence="1">Cytoplasm</location>
    </subcellularLocation>
</comment>
<comment type="similarity">
    <text evidence="1">Belongs to the GroES chaperonin family.</text>
</comment>
<accession>A7GIN4</accession>
<keyword id="KW-0143">Chaperone</keyword>
<keyword id="KW-0963">Cytoplasm</keyword>
<organism>
    <name type="scientific">Clostridium botulinum (strain Langeland / NCTC 10281 / Type F)</name>
    <dbReference type="NCBI Taxonomy" id="441772"/>
    <lineage>
        <taxon>Bacteria</taxon>
        <taxon>Bacillati</taxon>
        <taxon>Bacillota</taxon>
        <taxon>Clostridia</taxon>
        <taxon>Eubacteriales</taxon>
        <taxon>Clostridiaceae</taxon>
        <taxon>Clostridium</taxon>
    </lineage>
</organism>